<proteinExistence type="inferred from homology"/>
<comment type="function">
    <text evidence="1">Plays an important role in the de novo pathway of purine nucleotide biosynthesis. Catalyzes the first committed step in the biosynthesis of AMP from IMP.</text>
</comment>
<comment type="catalytic activity">
    <reaction evidence="1">
        <text>IMP + L-aspartate + GTP = N(6)-(1,2-dicarboxyethyl)-AMP + GDP + phosphate + 2 H(+)</text>
        <dbReference type="Rhea" id="RHEA:15753"/>
        <dbReference type="ChEBI" id="CHEBI:15378"/>
        <dbReference type="ChEBI" id="CHEBI:29991"/>
        <dbReference type="ChEBI" id="CHEBI:37565"/>
        <dbReference type="ChEBI" id="CHEBI:43474"/>
        <dbReference type="ChEBI" id="CHEBI:57567"/>
        <dbReference type="ChEBI" id="CHEBI:58053"/>
        <dbReference type="ChEBI" id="CHEBI:58189"/>
        <dbReference type="EC" id="6.3.4.4"/>
    </reaction>
</comment>
<comment type="cofactor">
    <cofactor evidence="1">
        <name>Mg(2+)</name>
        <dbReference type="ChEBI" id="CHEBI:18420"/>
    </cofactor>
    <text evidence="1">Binds 1 Mg(2+) ion per subunit.</text>
</comment>
<comment type="pathway">
    <text evidence="1">Purine metabolism; AMP biosynthesis via de novo pathway; AMP from IMP: step 1/2.</text>
</comment>
<comment type="subunit">
    <text evidence="1">Homodimer.</text>
</comment>
<comment type="subcellular location">
    <subcellularLocation>
        <location evidence="1">Cytoplasm</location>
    </subcellularLocation>
</comment>
<comment type="similarity">
    <text evidence="1">Belongs to the adenylosuccinate synthetase family.</text>
</comment>
<organism>
    <name type="scientific">Streptococcus pyogenes serotype M5 (strain Manfredo)</name>
    <dbReference type="NCBI Taxonomy" id="160491"/>
    <lineage>
        <taxon>Bacteria</taxon>
        <taxon>Bacillati</taxon>
        <taxon>Bacillota</taxon>
        <taxon>Bacilli</taxon>
        <taxon>Lactobacillales</taxon>
        <taxon>Streptococcaceae</taxon>
        <taxon>Streptococcus</taxon>
    </lineage>
</organism>
<gene>
    <name evidence="1" type="primary">purA</name>
    <name type="ordered locus">SpyM50131</name>
</gene>
<dbReference type="EC" id="6.3.4.4" evidence="1"/>
<dbReference type="EMBL" id="AM295007">
    <property type="protein sequence ID" value="CAM29474.1"/>
    <property type="molecule type" value="Genomic_DNA"/>
</dbReference>
<dbReference type="RefSeq" id="WP_011888556.1">
    <property type="nucleotide sequence ID" value="NC_009332.1"/>
</dbReference>
<dbReference type="SMR" id="A2RCA2"/>
<dbReference type="KEGG" id="spf:SpyM50131"/>
<dbReference type="HOGENOM" id="CLU_029848_0_0_9"/>
<dbReference type="UniPathway" id="UPA00075">
    <property type="reaction ID" value="UER00335"/>
</dbReference>
<dbReference type="GO" id="GO:0005737">
    <property type="term" value="C:cytoplasm"/>
    <property type="evidence" value="ECO:0007669"/>
    <property type="project" value="UniProtKB-SubCell"/>
</dbReference>
<dbReference type="GO" id="GO:0004019">
    <property type="term" value="F:adenylosuccinate synthase activity"/>
    <property type="evidence" value="ECO:0007669"/>
    <property type="project" value="UniProtKB-UniRule"/>
</dbReference>
<dbReference type="GO" id="GO:0005525">
    <property type="term" value="F:GTP binding"/>
    <property type="evidence" value="ECO:0007669"/>
    <property type="project" value="UniProtKB-UniRule"/>
</dbReference>
<dbReference type="GO" id="GO:0000287">
    <property type="term" value="F:magnesium ion binding"/>
    <property type="evidence" value="ECO:0007669"/>
    <property type="project" value="UniProtKB-UniRule"/>
</dbReference>
<dbReference type="GO" id="GO:0044208">
    <property type="term" value="P:'de novo' AMP biosynthetic process"/>
    <property type="evidence" value="ECO:0007669"/>
    <property type="project" value="UniProtKB-UniRule"/>
</dbReference>
<dbReference type="GO" id="GO:0046040">
    <property type="term" value="P:IMP metabolic process"/>
    <property type="evidence" value="ECO:0007669"/>
    <property type="project" value="TreeGrafter"/>
</dbReference>
<dbReference type="CDD" id="cd03108">
    <property type="entry name" value="AdSS"/>
    <property type="match status" value="1"/>
</dbReference>
<dbReference type="FunFam" id="1.10.300.10:FF:000001">
    <property type="entry name" value="Adenylosuccinate synthetase"/>
    <property type="match status" value="1"/>
</dbReference>
<dbReference type="FunFam" id="3.90.170.10:FF:000001">
    <property type="entry name" value="Adenylosuccinate synthetase"/>
    <property type="match status" value="1"/>
</dbReference>
<dbReference type="Gene3D" id="3.40.440.10">
    <property type="entry name" value="Adenylosuccinate Synthetase, subunit A, domain 1"/>
    <property type="match status" value="1"/>
</dbReference>
<dbReference type="Gene3D" id="1.10.300.10">
    <property type="entry name" value="Adenylosuccinate Synthetase, subunit A, domain 2"/>
    <property type="match status" value="1"/>
</dbReference>
<dbReference type="Gene3D" id="3.90.170.10">
    <property type="entry name" value="Adenylosuccinate Synthetase, subunit A, domain 3"/>
    <property type="match status" value="1"/>
</dbReference>
<dbReference type="HAMAP" id="MF_00011">
    <property type="entry name" value="Adenylosucc_synth"/>
    <property type="match status" value="1"/>
</dbReference>
<dbReference type="InterPro" id="IPR018220">
    <property type="entry name" value="Adenylosuccin_syn_GTP-bd"/>
</dbReference>
<dbReference type="InterPro" id="IPR033128">
    <property type="entry name" value="Adenylosuccin_syn_Lys_AS"/>
</dbReference>
<dbReference type="InterPro" id="IPR042109">
    <property type="entry name" value="Adenylosuccinate_synth_dom1"/>
</dbReference>
<dbReference type="InterPro" id="IPR042110">
    <property type="entry name" value="Adenylosuccinate_synth_dom2"/>
</dbReference>
<dbReference type="InterPro" id="IPR042111">
    <property type="entry name" value="Adenylosuccinate_synth_dom3"/>
</dbReference>
<dbReference type="InterPro" id="IPR001114">
    <property type="entry name" value="Adenylosuccinate_synthetase"/>
</dbReference>
<dbReference type="InterPro" id="IPR027417">
    <property type="entry name" value="P-loop_NTPase"/>
</dbReference>
<dbReference type="NCBIfam" id="NF002223">
    <property type="entry name" value="PRK01117.1"/>
    <property type="match status" value="1"/>
</dbReference>
<dbReference type="NCBIfam" id="TIGR00184">
    <property type="entry name" value="purA"/>
    <property type="match status" value="1"/>
</dbReference>
<dbReference type="PANTHER" id="PTHR11846">
    <property type="entry name" value="ADENYLOSUCCINATE SYNTHETASE"/>
    <property type="match status" value="1"/>
</dbReference>
<dbReference type="PANTHER" id="PTHR11846:SF0">
    <property type="entry name" value="ADENYLOSUCCINATE SYNTHETASE"/>
    <property type="match status" value="1"/>
</dbReference>
<dbReference type="Pfam" id="PF00709">
    <property type="entry name" value="Adenylsucc_synt"/>
    <property type="match status" value="1"/>
</dbReference>
<dbReference type="SMART" id="SM00788">
    <property type="entry name" value="Adenylsucc_synt"/>
    <property type="match status" value="1"/>
</dbReference>
<dbReference type="SUPFAM" id="SSF52540">
    <property type="entry name" value="P-loop containing nucleoside triphosphate hydrolases"/>
    <property type="match status" value="1"/>
</dbReference>
<dbReference type="PROSITE" id="PS01266">
    <property type="entry name" value="ADENYLOSUCCIN_SYN_1"/>
    <property type="match status" value="1"/>
</dbReference>
<dbReference type="PROSITE" id="PS00513">
    <property type="entry name" value="ADENYLOSUCCIN_SYN_2"/>
    <property type="match status" value="1"/>
</dbReference>
<evidence type="ECO:0000255" key="1">
    <source>
        <dbReference type="HAMAP-Rule" id="MF_00011"/>
    </source>
</evidence>
<accession>A2RCA2</accession>
<reference key="1">
    <citation type="journal article" date="2007" name="J. Bacteriol.">
        <title>Complete genome of acute rheumatic fever-associated serotype M5 Streptococcus pyogenes strain Manfredo.</title>
        <authorList>
            <person name="Holden M.T.G."/>
            <person name="Scott A."/>
            <person name="Cherevach I."/>
            <person name="Chillingworth T."/>
            <person name="Churcher C."/>
            <person name="Cronin A."/>
            <person name="Dowd L."/>
            <person name="Feltwell T."/>
            <person name="Hamlin N."/>
            <person name="Holroyd S."/>
            <person name="Jagels K."/>
            <person name="Moule S."/>
            <person name="Mungall K."/>
            <person name="Quail M.A."/>
            <person name="Price C."/>
            <person name="Rabbinowitsch E."/>
            <person name="Sharp S."/>
            <person name="Skelton J."/>
            <person name="Whitehead S."/>
            <person name="Barrell B.G."/>
            <person name="Kehoe M."/>
            <person name="Parkhill J."/>
        </authorList>
    </citation>
    <scope>NUCLEOTIDE SEQUENCE [LARGE SCALE GENOMIC DNA]</scope>
    <source>
        <strain>Manfredo</strain>
    </source>
</reference>
<name>PURA_STRPG</name>
<feature type="chain" id="PRO_1000000930" description="Adenylosuccinate synthetase">
    <location>
        <begin position="1"/>
        <end position="430"/>
    </location>
</feature>
<feature type="active site" description="Proton acceptor" evidence="1">
    <location>
        <position position="13"/>
    </location>
</feature>
<feature type="active site" description="Proton donor" evidence="1">
    <location>
        <position position="41"/>
    </location>
</feature>
<feature type="binding site" evidence="1">
    <location>
        <begin position="12"/>
        <end position="18"/>
    </location>
    <ligand>
        <name>GTP</name>
        <dbReference type="ChEBI" id="CHEBI:37565"/>
    </ligand>
</feature>
<feature type="binding site" description="in other chain" evidence="1">
    <location>
        <begin position="13"/>
        <end position="16"/>
    </location>
    <ligand>
        <name>IMP</name>
        <dbReference type="ChEBI" id="CHEBI:58053"/>
        <note>ligand shared between dimeric partners</note>
    </ligand>
</feature>
<feature type="binding site" evidence="1">
    <location>
        <position position="13"/>
    </location>
    <ligand>
        <name>Mg(2+)</name>
        <dbReference type="ChEBI" id="CHEBI:18420"/>
    </ligand>
</feature>
<feature type="binding site" description="in other chain" evidence="1">
    <location>
        <begin position="38"/>
        <end position="41"/>
    </location>
    <ligand>
        <name>IMP</name>
        <dbReference type="ChEBI" id="CHEBI:58053"/>
        <note>ligand shared between dimeric partners</note>
    </ligand>
</feature>
<feature type="binding site" evidence="1">
    <location>
        <begin position="40"/>
        <end position="42"/>
    </location>
    <ligand>
        <name>GTP</name>
        <dbReference type="ChEBI" id="CHEBI:37565"/>
    </ligand>
</feature>
<feature type="binding site" evidence="1">
    <location>
        <position position="40"/>
    </location>
    <ligand>
        <name>Mg(2+)</name>
        <dbReference type="ChEBI" id="CHEBI:18420"/>
    </ligand>
</feature>
<feature type="binding site" description="in other chain" evidence="1">
    <location>
        <position position="128"/>
    </location>
    <ligand>
        <name>IMP</name>
        <dbReference type="ChEBI" id="CHEBI:58053"/>
        <note>ligand shared between dimeric partners</note>
    </ligand>
</feature>
<feature type="binding site" evidence="1">
    <location>
        <position position="142"/>
    </location>
    <ligand>
        <name>IMP</name>
        <dbReference type="ChEBI" id="CHEBI:58053"/>
        <note>ligand shared between dimeric partners</note>
    </ligand>
</feature>
<feature type="binding site" description="in other chain" evidence="1">
    <location>
        <position position="223"/>
    </location>
    <ligand>
        <name>IMP</name>
        <dbReference type="ChEBI" id="CHEBI:58053"/>
        <note>ligand shared between dimeric partners</note>
    </ligand>
</feature>
<feature type="binding site" description="in other chain" evidence="1">
    <location>
        <position position="238"/>
    </location>
    <ligand>
        <name>IMP</name>
        <dbReference type="ChEBI" id="CHEBI:58053"/>
        <note>ligand shared between dimeric partners</note>
    </ligand>
</feature>
<feature type="binding site" evidence="1">
    <location>
        <begin position="298"/>
        <end position="304"/>
    </location>
    <ligand>
        <name>substrate</name>
    </ligand>
</feature>
<feature type="binding site" description="in other chain" evidence="1">
    <location>
        <position position="302"/>
    </location>
    <ligand>
        <name>IMP</name>
        <dbReference type="ChEBI" id="CHEBI:58053"/>
        <note>ligand shared between dimeric partners</note>
    </ligand>
</feature>
<feature type="binding site" evidence="1">
    <location>
        <position position="304"/>
    </location>
    <ligand>
        <name>GTP</name>
        <dbReference type="ChEBI" id="CHEBI:37565"/>
    </ligand>
</feature>
<feature type="binding site" evidence="1">
    <location>
        <begin position="330"/>
        <end position="332"/>
    </location>
    <ligand>
        <name>GTP</name>
        <dbReference type="ChEBI" id="CHEBI:37565"/>
    </ligand>
</feature>
<feature type="binding site" evidence="1">
    <location>
        <begin position="412"/>
        <end position="414"/>
    </location>
    <ligand>
        <name>GTP</name>
        <dbReference type="ChEBI" id="CHEBI:37565"/>
    </ligand>
</feature>
<protein>
    <recommendedName>
        <fullName evidence="1">Adenylosuccinate synthetase</fullName>
        <shortName evidence="1">AMPSase</shortName>
        <shortName evidence="1">AdSS</shortName>
        <ecNumber evidence="1">6.3.4.4</ecNumber>
    </recommendedName>
    <alternativeName>
        <fullName evidence="1">IMP--aspartate ligase</fullName>
    </alternativeName>
</protein>
<sequence length="430" mass="47507">MTSVVVVGTQWGDEGKGKITDFLSADAEVIARYQGGDNAGHTIVIDGKKFKLHLIPSGIFFPQKISVIGNGVVVNPKSLVKELAYLHDEGVTTDNLRISDRAHVILPYHIQLDQLQEDAKGDNKIGTTIKGIGPAYMDKAARVGIRIADLLDKDIFAERLRINLAEKNRLFEKMYDSTPLDFDAIFEEYYAYGQEIKQYVTDTSVILNDALDAGKRVLFEGAQGVMLDIDQGTYPFVTSSNPVAGGVTIGSGVGPSKINKVVGVCKAYTSRVGDGPFPTELFDEVGERIREVGHEYGTTTGRPRRVGWFDSVVMRHSRRVSGITNLSLNSIDVLSGLDTVKICVAYDLDRKRIDYYPASLEQLKRCKPIYEELPGWQEDITGVRSLDELPENARNYVRRVGELVGVRISTFSVGPGREQTNILESVWASI</sequence>
<keyword id="KW-0963">Cytoplasm</keyword>
<keyword id="KW-0342">GTP-binding</keyword>
<keyword id="KW-0436">Ligase</keyword>
<keyword id="KW-0460">Magnesium</keyword>
<keyword id="KW-0479">Metal-binding</keyword>
<keyword id="KW-0547">Nucleotide-binding</keyword>
<keyword id="KW-0658">Purine biosynthesis</keyword>